<comment type="function">
    <text evidence="1">Increases the formation of ribosomal termination complexes and stimulates activities of RF-1 and RF-2. It binds guanine nucleotides and has strong preference for UGA stop codons. It may interact directly with the ribosome. The stimulation of RF-1 and RF-2 is significantly reduced by GTP and GDP, but not by GMP (By similarity).</text>
</comment>
<comment type="subcellular location">
    <subcellularLocation>
        <location evidence="1">Cytoplasm</location>
    </subcellularLocation>
</comment>
<comment type="similarity">
    <text evidence="2">Belongs to the TRAFAC class translation factor GTPase superfamily. Classic translation factor GTPase family. PrfC subfamily.</text>
</comment>
<sequence length="527" mass="59174">MSYPLEEVNKRRTFAIISHPDAGKTTITEKVLLYGNAIQTAGSVKGKGSAAHAKSDWMEMEKQRGISITTSVMQFPYNDCLVNLLDTPGHEDFSEDTYRTLTAVDSCLMVIDSAKGVEERTIKLMEVTRLRDTPIITFMNKLDRDIRDPIELLDEVENVLKIRCAPITWPIGCGKLFKGVYHLAKDETYLYQSGQGSTIQAVRVVKGLNNPELDVAVGDDLAQQLREELELVQGASNEFEQDAFIKGELTPVFFGTALGNFGVDHFLDGLTQWAPKPQSRQADTRTVESAEEKFSGFVFKIQANMDPKHRDRVAFMRVVSGKYEKGMKLKHVRIGKDVVISDALTFMAGDRAHAEEAYAGDIIGLHNHGTIQIGDTFTQGETLKFTGIPNFAPELFRRIRLKDPLKQKQLLKGLVQLSEEGAVQVFRPLLNNDLIVGAVGVLQFDVVVSRLKTEYNVEAIYENVNVATARWVECADEKKFEEFKRKNEQNLALDGGDNLTYIAPTMVNLNLAQERYPDVVFYKTREH</sequence>
<gene>
    <name type="primary">prfC</name>
    <name type="ordered locus">HI_1735</name>
</gene>
<organism>
    <name type="scientific">Haemophilus influenzae (strain ATCC 51907 / DSM 11121 / KW20 / Rd)</name>
    <dbReference type="NCBI Taxonomy" id="71421"/>
    <lineage>
        <taxon>Bacteria</taxon>
        <taxon>Pseudomonadati</taxon>
        <taxon>Pseudomonadota</taxon>
        <taxon>Gammaproteobacteria</taxon>
        <taxon>Pasteurellales</taxon>
        <taxon>Pasteurellaceae</taxon>
        <taxon>Haemophilus</taxon>
    </lineage>
</organism>
<protein>
    <recommendedName>
        <fullName>Peptide chain release factor 3</fullName>
        <shortName>RF-3</shortName>
    </recommendedName>
</protein>
<evidence type="ECO:0000250" key="1"/>
<evidence type="ECO:0000305" key="2"/>
<feature type="chain" id="PRO_0000210944" description="Peptide chain release factor 3">
    <location>
        <begin position="1"/>
        <end position="527"/>
    </location>
</feature>
<feature type="domain" description="tr-type G">
    <location>
        <begin position="9"/>
        <end position="278"/>
    </location>
</feature>
<feature type="binding site" evidence="1">
    <location>
        <begin position="18"/>
        <end position="25"/>
    </location>
    <ligand>
        <name>GTP</name>
        <dbReference type="ChEBI" id="CHEBI:37565"/>
    </ligand>
</feature>
<feature type="binding site" evidence="1">
    <location>
        <begin position="86"/>
        <end position="90"/>
    </location>
    <ligand>
        <name>GTP</name>
        <dbReference type="ChEBI" id="CHEBI:37565"/>
    </ligand>
</feature>
<feature type="binding site" evidence="1">
    <location>
        <begin position="140"/>
        <end position="143"/>
    </location>
    <ligand>
        <name>GTP</name>
        <dbReference type="ChEBI" id="CHEBI:37565"/>
    </ligand>
</feature>
<accession>P43928</accession>
<proteinExistence type="inferred from homology"/>
<reference key="1">
    <citation type="journal article" date="1995" name="Science">
        <title>Whole-genome random sequencing and assembly of Haemophilus influenzae Rd.</title>
        <authorList>
            <person name="Fleischmann R.D."/>
            <person name="Adams M.D."/>
            <person name="White O."/>
            <person name="Clayton R.A."/>
            <person name="Kirkness E.F."/>
            <person name="Kerlavage A.R."/>
            <person name="Bult C.J."/>
            <person name="Tomb J.-F."/>
            <person name="Dougherty B.A."/>
            <person name="Merrick J.M."/>
            <person name="McKenney K."/>
            <person name="Sutton G.G."/>
            <person name="FitzHugh W."/>
            <person name="Fields C.A."/>
            <person name="Gocayne J.D."/>
            <person name="Scott J.D."/>
            <person name="Shirley R."/>
            <person name="Liu L.-I."/>
            <person name="Glodek A."/>
            <person name="Kelley J.M."/>
            <person name="Weidman J.F."/>
            <person name="Phillips C.A."/>
            <person name="Spriggs T."/>
            <person name="Hedblom E."/>
            <person name="Cotton M.D."/>
            <person name="Utterback T.R."/>
            <person name="Hanna M.C."/>
            <person name="Nguyen D.T."/>
            <person name="Saudek D.M."/>
            <person name="Brandon R.C."/>
            <person name="Fine L.D."/>
            <person name="Fritchman J.L."/>
            <person name="Fuhrmann J.L."/>
            <person name="Geoghagen N.S.M."/>
            <person name="Gnehm C.L."/>
            <person name="McDonald L.A."/>
            <person name="Small K.V."/>
            <person name="Fraser C.M."/>
            <person name="Smith H.O."/>
            <person name="Venter J.C."/>
        </authorList>
    </citation>
    <scope>NUCLEOTIDE SEQUENCE [LARGE SCALE GENOMIC DNA]</scope>
    <source>
        <strain>ATCC 51907 / DSM 11121 / KW20 / Rd</strain>
    </source>
</reference>
<name>RF3_HAEIN</name>
<dbReference type="EMBL" id="L42023">
    <property type="protein sequence ID" value="AAC23380.1"/>
    <property type="molecule type" value="Genomic_DNA"/>
</dbReference>
<dbReference type="PIR" id="C64139">
    <property type="entry name" value="C64139"/>
</dbReference>
<dbReference type="RefSeq" id="NP_439877.1">
    <property type="nucleotide sequence ID" value="NC_000907.1"/>
</dbReference>
<dbReference type="SMR" id="P43928"/>
<dbReference type="STRING" id="71421.HI_1735"/>
<dbReference type="EnsemblBacteria" id="AAC23380">
    <property type="protein sequence ID" value="AAC23380"/>
    <property type="gene ID" value="HI_1735"/>
</dbReference>
<dbReference type="KEGG" id="hin:HI_1735"/>
<dbReference type="PATRIC" id="fig|71421.8.peg.1816"/>
<dbReference type="eggNOG" id="COG4108">
    <property type="taxonomic scope" value="Bacteria"/>
</dbReference>
<dbReference type="HOGENOM" id="CLU_002794_2_1_6"/>
<dbReference type="OrthoDB" id="9801472at2"/>
<dbReference type="PhylomeDB" id="P43928"/>
<dbReference type="BioCyc" id="HINF71421:G1GJ1-1751-MONOMER"/>
<dbReference type="Proteomes" id="UP000000579">
    <property type="component" value="Chromosome"/>
</dbReference>
<dbReference type="GO" id="GO:0005829">
    <property type="term" value="C:cytosol"/>
    <property type="evidence" value="ECO:0000318"/>
    <property type="project" value="GO_Central"/>
</dbReference>
<dbReference type="GO" id="GO:0005525">
    <property type="term" value="F:GTP binding"/>
    <property type="evidence" value="ECO:0007669"/>
    <property type="project" value="UniProtKB-UniRule"/>
</dbReference>
<dbReference type="GO" id="GO:0003924">
    <property type="term" value="F:GTPase activity"/>
    <property type="evidence" value="ECO:0007669"/>
    <property type="project" value="InterPro"/>
</dbReference>
<dbReference type="GO" id="GO:0097216">
    <property type="term" value="F:guanosine tetraphosphate binding"/>
    <property type="evidence" value="ECO:0007669"/>
    <property type="project" value="UniProtKB-ARBA"/>
</dbReference>
<dbReference type="GO" id="GO:0016150">
    <property type="term" value="F:translation release factor activity, codon nonspecific"/>
    <property type="evidence" value="ECO:0000318"/>
    <property type="project" value="GO_Central"/>
</dbReference>
<dbReference type="GO" id="GO:0016149">
    <property type="term" value="F:translation release factor activity, codon specific"/>
    <property type="evidence" value="ECO:0007669"/>
    <property type="project" value="UniProtKB-UniRule"/>
</dbReference>
<dbReference type="GO" id="GO:0006449">
    <property type="term" value="P:regulation of translational termination"/>
    <property type="evidence" value="ECO:0007669"/>
    <property type="project" value="UniProtKB-UniRule"/>
</dbReference>
<dbReference type="GO" id="GO:0006415">
    <property type="term" value="P:translational termination"/>
    <property type="evidence" value="ECO:0000318"/>
    <property type="project" value="GO_Central"/>
</dbReference>
<dbReference type="CDD" id="cd04169">
    <property type="entry name" value="RF3"/>
    <property type="match status" value="1"/>
</dbReference>
<dbReference type="CDD" id="cd03689">
    <property type="entry name" value="RF3_II"/>
    <property type="match status" value="1"/>
</dbReference>
<dbReference type="CDD" id="cd16259">
    <property type="entry name" value="RF3_III"/>
    <property type="match status" value="1"/>
</dbReference>
<dbReference type="FunFam" id="2.40.30.10:FF:000040">
    <property type="entry name" value="Peptide chain release factor 3"/>
    <property type="match status" value="1"/>
</dbReference>
<dbReference type="FunFam" id="3.30.70.3280:FF:000001">
    <property type="entry name" value="Peptide chain release factor 3"/>
    <property type="match status" value="1"/>
</dbReference>
<dbReference type="FunFam" id="3.40.50.300:FF:000542">
    <property type="entry name" value="Peptide chain release factor 3"/>
    <property type="match status" value="1"/>
</dbReference>
<dbReference type="Gene3D" id="3.40.50.300">
    <property type="entry name" value="P-loop containing nucleotide triphosphate hydrolases"/>
    <property type="match status" value="2"/>
</dbReference>
<dbReference type="Gene3D" id="3.30.70.3280">
    <property type="entry name" value="Peptide chain release factor 3, domain III"/>
    <property type="match status" value="1"/>
</dbReference>
<dbReference type="HAMAP" id="MF_00072">
    <property type="entry name" value="Rel_fac_3"/>
    <property type="match status" value="1"/>
</dbReference>
<dbReference type="InterPro" id="IPR053905">
    <property type="entry name" value="EF-G-like_DII"/>
</dbReference>
<dbReference type="InterPro" id="IPR035647">
    <property type="entry name" value="EFG_III/V"/>
</dbReference>
<dbReference type="InterPro" id="IPR031157">
    <property type="entry name" value="G_TR_CS"/>
</dbReference>
<dbReference type="InterPro" id="IPR027417">
    <property type="entry name" value="P-loop_NTPase"/>
</dbReference>
<dbReference type="InterPro" id="IPR004548">
    <property type="entry name" value="PrfC"/>
</dbReference>
<dbReference type="InterPro" id="IPR032090">
    <property type="entry name" value="RF3_C"/>
</dbReference>
<dbReference type="InterPro" id="IPR038467">
    <property type="entry name" value="RF3_dom_3_sf"/>
</dbReference>
<dbReference type="InterPro" id="IPR041732">
    <property type="entry name" value="RF3_GTP-bd"/>
</dbReference>
<dbReference type="InterPro" id="IPR005225">
    <property type="entry name" value="Small_GTP-bd"/>
</dbReference>
<dbReference type="InterPro" id="IPR000795">
    <property type="entry name" value="T_Tr_GTP-bd_dom"/>
</dbReference>
<dbReference type="InterPro" id="IPR009000">
    <property type="entry name" value="Transl_B-barrel_sf"/>
</dbReference>
<dbReference type="NCBIfam" id="TIGR00503">
    <property type="entry name" value="prfC"/>
    <property type="match status" value="1"/>
</dbReference>
<dbReference type="NCBIfam" id="NF001964">
    <property type="entry name" value="PRK00741.1"/>
    <property type="match status" value="1"/>
</dbReference>
<dbReference type="NCBIfam" id="TIGR00231">
    <property type="entry name" value="small_GTP"/>
    <property type="match status" value="1"/>
</dbReference>
<dbReference type="PANTHER" id="PTHR43556">
    <property type="entry name" value="PEPTIDE CHAIN RELEASE FACTOR RF3"/>
    <property type="match status" value="1"/>
</dbReference>
<dbReference type="PANTHER" id="PTHR43556:SF2">
    <property type="entry name" value="PEPTIDE CHAIN RELEASE FACTOR RF3"/>
    <property type="match status" value="1"/>
</dbReference>
<dbReference type="Pfam" id="PF22042">
    <property type="entry name" value="EF-G_D2"/>
    <property type="match status" value="1"/>
</dbReference>
<dbReference type="Pfam" id="PF00009">
    <property type="entry name" value="GTP_EFTU"/>
    <property type="match status" value="1"/>
</dbReference>
<dbReference type="Pfam" id="PF16658">
    <property type="entry name" value="RF3_C"/>
    <property type="match status" value="1"/>
</dbReference>
<dbReference type="PRINTS" id="PR00315">
    <property type="entry name" value="ELONGATNFCT"/>
</dbReference>
<dbReference type="SUPFAM" id="SSF54980">
    <property type="entry name" value="EF-G C-terminal domain-like"/>
    <property type="match status" value="1"/>
</dbReference>
<dbReference type="SUPFAM" id="SSF52540">
    <property type="entry name" value="P-loop containing nucleoside triphosphate hydrolases"/>
    <property type="match status" value="1"/>
</dbReference>
<dbReference type="SUPFAM" id="SSF50447">
    <property type="entry name" value="Translation proteins"/>
    <property type="match status" value="1"/>
</dbReference>
<dbReference type="PROSITE" id="PS00301">
    <property type="entry name" value="G_TR_1"/>
    <property type="match status" value="1"/>
</dbReference>
<dbReference type="PROSITE" id="PS51722">
    <property type="entry name" value="G_TR_2"/>
    <property type="match status" value="1"/>
</dbReference>
<keyword id="KW-0963">Cytoplasm</keyword>
<keyword id="KW-0342">GTP-binding</keyword>
<keyword id="KW-0547">Nucleotide-binding</keyword>
<keyword id="KW-0648">Protein biosynthesis</keyword>
<keyword id="KW-1185">Reference proteome</keyword>